<proteinExistence type="inferred from homology"/>
<gene>
    <name evidence="1" type="primary">anmK</name>
    <name type="ordered locus">LPC_0819</name>
</gene>
<feature type="chain" id="PRO_1000067352" description="Anhydro-N-acetylmuramic acid kinase">
    <location>
        <begin position="1"/>
        <end position="366"/>
    </location>
</feature>
<feature type="binding site" evidence="1">
    <location>
        <begin position="10"/>
        <end position="17"/>
    </location>
    <ligand>
        <name>ATP</name>
        <dbReference type="ChEBI" id="CHEBI:30616"/>
    </ligand>
</feature>
<comment type="function">
    <text evidence="1">Catalyzes the specific phosphorylation of 1,6-anhydro-N-acetylmuramic acid (anhMurNAc) with the simultaneous cleavage of the 1,6-anhydro ring, generating MurNAc-6-P. Is required for the utilization of anhMurNAc either imported from the medium or derived from its own cell wall murein, and thus plays a role in cell wall recycling.</text>
</comment>
<comment type="catalytic activity">
    <reaction evidence="1">
        <text>1,6-anhydro-N-acetyl-beta-muramate + ATP + H2O = N-acetyl-D-muramate 6-phosphate + ADP + H(+)</text>
        <dbReference type="Rhea" id="RHEA:24952"/>
        <dbReference type="ChEBI" id="CHEBI:15377"/>
        <dbReference type="ChEBI" id="CHEBI:15378"/>
        <dbReference type="ChEBI" id="CHEBI:30616"/>
        <dbReference type="ChEBI" id="CHEBI:58690"/>
        <dbReference type="ChEBI" id="CHEBI:58722"/>
        <dbReference type="ChEBI" id="CHEBI:456216"/>
        <dbReference type="EC" id="2.7.1.170"/>
    </reaction>
</comment>
<comment type="pathway">
    <text evidence="1">Amino-sugar metabolism; 1,6-anhydro-N-acetylmuramate degradation.</text>
</comment>
<comment type="pathway">
    <text evidence="1">Cell wall biogenesis; peptidoglycan recycling.</text>
</comment>
<comment type="similarity">
    <text evidence="1">Belongs to the anhydro-N-acetylmuramic acid kinase family.</text>
</comment>
<dbReference type="EC" id="2.7.1.170" evidence="1"/>
<dbReference type="EMBL" id="CP000675">
    <property type="protein sequence ID" value="ABQ54795.1"/>
    <property type="molecule type" value="Genomic_DNA"/>
</dbReference>
<dbReference type="RefSeq" id="WP_011946420.1">
    <property type="nucleotide sequence ID" value="NC_009494.2"/>
</dbReference>
<dbReference type="SMR" id="A5IBP5"/>
<dbReference type="KEGG" id="lpc:LPC_0819"/>
<dbReference type="HOGENOM" id="CLU_038782_0_0_6"/>
<dbReference type="UniPathway" id="UPA00343"/>
<dbReference type="UniPathway" id="UPA00544"/>
<dbReference type="GO" id="GO:0005524">
    <property type="term" value="F:ATP binding"/>
    <property type="evidence" value="ECO:0007669"/>
    <property type="project" value="UniProtKB-UniRule"/>
</dbReference>
<dbReference type="GO" id="GO:0016301">
    <property type="term" value="F:kinase activity"/>
    <property type="evidence" value="ECO:0007669"/>
    <property type="project" value="UniProtKB-KW"/>
</dbReference>
<dbReference type="GO" id="GO:0016773">
    <property type="term" value="F:phosphotransferase activity, alcohol group as acceptor"/>
    <property type="evidence" value="ECO:0007669"/>
    <property type="project" value="UniProtKB-UniRule"/>
</dbReference>
<dbReference type="GO" id="GO:0097175">
    <property type="term" value="P:1,6-anhydro-N-acetyl-beta-muramic acid catabolic process"/>
    <property type="evidence" value="ECO:0007669"/>
    <property type="project" value="UniProtKB-UniRule"/>
</dbReference>
<dbReference type="GO" id="GO:0006040">
    <property type="term" value="P:amino sugar metabolic process"/>
    <property type="evidence" value="ECO:0007669"/>
    <property type="project" value="InterPro"/>
</dbReference>
<dbReference type="GO" id="GO:0009254">
    <property type="term" value="P:peptidoglycan turnover"/>
    <property type="evidence" value="ECO:0007669"/>
    <property type="project" value="UniProtKB-UniRule"/>
</dbReference>
<dbReference type="CDD" id="cd24050">
    <property type="entry name" value="ASKHA_NBD_ANMK"/>
    <property type="match status" value="1"/>
</dbReference>
<dbReference type="Gene3D" id="3.30.420.40">
    <property type="match status" value="2"/>
</dbReference>
<dbReference type="HAMAP" id="MF_01270">
    <property type="entry name" value="AnhMurNAc_kinase"/>
    <property type="match status" value="1"/>
</dbReference>
<dbReference type="InterPro" id="IPR005338">
    <property type="entry name" value="Anhydro_N_Ac-Mur_kinase"/>
</dbReference>
<dbReference type="InterPro" id="IPR043129">
    <property type="entry name" value="ATPase_NBD"/>
</dbReference>
<dbReference type="NCBIfam" id="NF007139">
    <property type="entry name" value="PRK09585.1-3"/>
    <property type="match status" value="1"/>
</dbReference>
<dbReference type="PANTHER" id="PTHR30605">
    <property type="entry name" value="ANHYDRO-N-ACETYLMURAMIC ACID KINASE"/>
    <property type="match status" value="1"/>
</dbReference>
<dbReference type="PANTHER" id="PTHR30605:SF0">
    <property type="entry name" value="ANHYDRO-N-ACETYLMURAMIC ACID KINASE"/>
    <property type="match status" value="1"/>
</dbReference>
<dbReference type="Pfam" id="PF03702">
    <property type="entry name" value="AnmK"/>
    <property type="match status" value="1"/>
</dbReference>
<dbReference type="SUPFAM" id="SSF53067">
    <property type="entry name" value="Actin-like ATPase domain"/>
    <property type="match status" value="1"/>
</dbReference>
<name>ANMK_LEGPC</name>
<organism>
    <name type="scientific">Legionella pneumophila (strain Corby)</name>
    <dbReference type="NCBI Taxonomy" id="400673"/>
    <lineage>
        <taxon>Bacteria</taxon>
        <taxon>Pseudomonadati</taxon>
        <taxon>Pseudomonadota</taxon>
        <taxon>Gammaproteobacteria</taxon>
        <taxon>Legionellales</taxon>
        <taxon>Legionellaceae</taxon>
        <taxon>Legionella</taxon>
    </lineage>
</organism>
<reference key="1">
    <citation type="submission" date="2006-11" db="EMBL/GenBank/DDBJ databases">
        <title>Identification and characterization of a new conjugation/ type IVA secretion system (trb/tra) of L. pneumophila Corby localized on a mobile genomic island.</title>
        <authorList>
            <person name="Gloeckner G."/>
            <person name="Albert-Weissenberger C."/>
            <person name="Weinmann E."/>
            <person name="Jacobi S."/>
            <person name="Schunder E."/>
            <person name="Steinert M."/>
            <person name="Buchrieser C."/>
            <person name="Hacker J."/>
            <person name="Heuner K."/>
        </authorList>
    </citation>
    <scope>NUCLEOTIDE SEQUENCE [LARGE SCALE GENOMIC DNA]</scope>
    <source>
        <strain>Corby</strain>
    </source>
</reference>
<protein>
    <recommendedName>
        <fullName evidence="1">Anhydro-N-acetylmuramic acid kinase</fullName>
        <ecNumber evidence="1">2.7.1.170</ecNumber>
    </recommendedName>
    <alternativeName>
        <fullName evidence="1">AnhMurNAc kinase</fullName>
    </alternativeName>
</protein>
<sequence>MSLYIGLMSGTSMDGIDAALLELPSNQLIHGITKQYSDDVRRNLDDLIMGNHLTLASICQLNTLIGREFAEAVRQLLIEIKVHPKEIQAIGSHGQTVCHDTSGNIPYTLQLGCGHTISSLTGITVVADFRTRDLVNGGQGAPFAPLYHQQIFSKVNESVAVVNIGGIANVTFIAKNQMTRGWDIGPGNCLMDAWIYKNKGAPFDKSGVWASQGEVIHPLLEYLLQDPFFHLDSPKSIGKEYFSLSWLQKHLKPDYTPADIQATLLALTAHTIAETILNESEEIKQLYLCGGGAHNTHLKENLARLLPGITVKSIAELGISPDYLEAMMFAWLAAQTINQIPVNLTSITGAKGIAILGAVYPIIKSY</sequence>
<accession>A5IBP5</accession>
<keyword id="KW-0067">ATP-binding</keyword>
<keyword id="KW-0119">Carbohydrate metabolism</keyword>
<keyword id="KW-0418">Kinase</keyword>
<keyword id="KW-0547">Nucleotide-binding</keyword>
<keyword id="KW-0808">Transferase</keyword>
<evidence type="ECO:0000255" key="1">
    <source>
        <dbReference type="HAMAP-Rule" id="MF_01270"/>
    </source>
</evidence>